<evidence type="ECO:0000255" key="1">
    <source>
        <dbReference type="HAMAP-Rule" id="MF_00368"/>
    </source>
</evidence>
<evidence type="ECO:0000269" key="2">
    <source>
    </source>
</evidence>
<evidence type="ECO:0000305" key="3"/>
<keyword id="KW-0903">Direct protein sequencing</keyword>
<keyword id="KW-1185">Reference proteome</keyword>
<keyword id="KW-0687">Ribonucleoprotein</keyword>
<keyword id="KW-0689">Ribosomal protein</keyword>
<accession>P23349</accession>
<protein>
    <recommendedName>
        <fullName evidence="1">Large ribosomal subunit protein bL12</fullName>
    </recommendedName>
    <alternativeName>
        <fullName evidence="3">50S ribosomal protein L7/L12</fullName>
    </alternativeName>
</protein>
<gene>
    <name evidence="1" type="primary">rplL</name>
    <name evidence="1" type="synonym">rpl12</name>
    <name type="ordered locus">sll1746</name>
</gene>
<organism>
    <name type="scientific">Synechocystis sp. (strain ATCC 27184 / PCC 6803 / Kazusa)</name>
    <dbReference type="NCBI Taxonomy" id="1111708"/>
    <lineage>
        <taxon>Bacteria</taxon>
        <taxon>Bacillati</taxon>
        <taxon>Cyanobacteriota</taxon>
        <taxon>Cyanophyceae</taxon>
        <taxon>Synechococcales</taxon>
        <taxon>Merismopediaceae</taxon>
        <taxon>Synechocystis</taxon>
    </lineage>
</organism>
<reference key="1">
    <citation type="journal article" date="1990" name="Biochim. Biophys. Acta">
        <title>Cloning and characterization of the genes for ribosomal proteins L10 and L12 from Synechocystis Sp. PCC 6803: comparison of gene clustering pattern and protein sequence homology between cyanobacteria and chloroplasts.</title>
        <authorList>
            <person name="Sibold C."/>
            <person name="Subramanian A.R."/>
        </authorList>
    </citation>
    <scope>NUCLEOTIDE SEQUENCE [GENOMIC DNA]</scope>
</reference>
<reference key="2">
    <citation type="journal article" date="1996" name="DNA Res.">
        <title>Sequence analysis of the genome of the unicellular cyanobacterium Synechocystis sp. strain PCC6803. II. Sequence determination of the entire genome and assignment of potential protein-coding regions.</title>
        <authorList>
            <person name="Kaneko T."/>
            <person name="Sato S."/>
            <person name="Kotani H."/>
            <person name="Tanaka A."/>
            <person name="Asamizu E."/>
            <person name="Nakamura Y."/>
            <person name="Miyajima N."/>
            <person name="Hirosawa M."/>
            <person name="Sugiura M."/>
            <person name="Sasamoto S."/>
            <person name="Kimura T."/>
            <person name="Hosouchi T."/>
            <person name="Matsuno A."/>
            <person name="Muraki A."/>
            <person name="Nakazaki N."/>
            <person name="Naruo K."/>
            <person name="Okumura S."/>
            <person name="Shimpo S."/>
            <person name="Takeuchi C."/>
            <person name="Wada T."/>
            <person name="Watanabe A."/>
            <person name="Yamada M."/>
            <person name="Yasuda M."/>
            <person name="Tabata S."/>
        </authorList>
    </citation>
    <scope>NUCLEOTIDE SEQUENCE [LARGE SCALE GENOMIC DNA]</scope>
    <source>
        <strain>ATCC 27184 / PCC 6803 / Kazusa</strain>
    </source>
</reference>
<reference key="3">
    <citation type="journal article" date="1993" name="J. Biol. Chem.">
        <title>A novel operon organization involving the genes for chorismate synthase (aromatic biosynthesis pathway) and ribosomal GTPase center proteins (L11, L1, L10, L12: rplKAJL) in cyanobacterium Synechocystis PCC 6803.</title>
        <authorList>
            <person name="Schmidt J."/>
            <person name="Bubunenko M."/>
            <person name="Subramanian A.R."/>
        </authorList>
    </citation>
    <scope>NUCLEOTIDE SEQUENCE [GENOMIC DNA] OF 117-128</scope>
</reference>
<reference key="4">
    <citation type="journal article" date="1997" name="Electrophoresis">
        <title>Towards a proteome project of cyanobacterium Synechocystis sp. strain PCC6803: linking 130 protein spots with their respective genes.</title>
        <authorList>
            <person name="Sazuka T."/>
            <person name="Ohara O."/>
        </authorList>
    </citation>
    <scope>PROTEIN SEQUENCE OF 2-8</scope>
</reference>
<dbReference type="EMBL" id="X53178">
    <property type="protein sequence ID" value="CAA37318.1"/>
    <property type="molecule type" value="Genomic_DNA"/>
</dbReference>
<dbReference type="EMBL" id="BA000022">
    <property type="protein sequence ID" value="BAA17416.1"/>
    <property type="molecule type" value="Genomic_DNA"/>
</dbReference>
<dbReference type="EMBL" id="X67516">
    <property type="protein sequence ID" value="CAA47854.1"/>
    <property type="molecule type" value="Genomic_DNA"/>
</dbReference>
<dbReference type="PIR" id="S13069">
    <property type="entry name" value="S13069"/>
</dbReference>
<dbReference type="SMR" id="P23349"/>
<dbReference type="FunCoup" id="P23349">
    <property type="interactions" value="463"/>
</dbReference>
<dbReference type="IntAct" id="P23349">
    <property type="interactions" value="1"/>
</dbReference>
<dbReference type="STRING" id="1148.gene:10498279"/>
<dbReference type="PaxDb" id="1148-1652495"/>
<dbReference type="EnsemblBacteria" id="BAA17416">
    <property type="protein sequence ID" value="BAA17416"/>
    <property type="gene ID" value="BAA17416"/>
</dbReference>
<dbReference type="KEGG" id="syn:sll1746"/>
<dbReference type="eggNOG" id="COG0222">
    <property type="taxonomic scope" value="Bacteria"/>
</dbReference>
<dbReference type="InParanoid" id="P23349"/>
<dbReference type="PhylomeDB" id="P23349"/>
<dbReference type="Proteomes" id="UP000001425">
    <property type="component" value="Chromosome"/>
</dbReference>
<dbReference type="GO" id="GO:0022625">
    <property type="term" value="C:cytosolic large ribosomal subunit"/>
    <property type="evidence" value="ECO:0000318"/>
    <property type="project" value="GO_Central"/>
</dbReference>
<dbReference type="GO" id="GO:0003729">
    <property type="term" value="F:mRNA binding"/>
    <property type="evidence" value="ECO:0000318"/>
    <property type="project" value="GO_Central"/>
</dbReference>
<dbReference type="GO" id="GO:0003735">
    <property type="term" value="F:structural constituent of ribosome"/>
    <property type="evidence" value="ECO:0000318"/>
    <property type="project" value="GO_Central"/>
</dbReference>
<dbReference type="GO" id="GO:0006412">
    <property type="term" value="P:translation"/>
    <property type="evidence" value="ECO:0000318"/>
    <property type="project" value="GO_Central"/>
</dbReference>
<dbReference type="CDD" id="cd00387">
    <property type="entry name" value="Ribosomal_L7_L12"/>
    <property type="match status" value="1"/>
</dbReference>
<dbReference type="FunFam" id="1.20.5.710:FF:000010">
    <property type="entry name" value="50S ribosomal protein L7/L12"/>
    <property type="match status" value="1"/>
</dbReference>
<dbReference type="FunFam" id="3.30.1390.10:FF:000001">
    <property type="entry name" value="50S ribosomal protein L7/L12"/>
    <property type="match status" value="1"/>
</dbReference>
<dbReference type="Gene3D" id="3.30.1390.10">
    <property type="match status" value="1"/>
</dbReference>
<dbReference type="Gene3D" id="1.20.5.710">
    <property type="entry name" value="Single helix bin"/>
    <property type="match status" value="1"/>
</dbReference>
<dbReference type="HAMAP" id="MF_00368">
    <property type="entry name" value="Ribosomal_bL12"/>
    <property type="match status" value="1"/>
</dbReference>
<dbReference type="InterPro" id="IPR000206">
    <property type="entry name" value="Ribosomal_bL12"/>
</dbReference>
<dbReference type="InterPro" id="IPR013823">
    <property type="entry name" value="Ribosomal_bL12_C"/>
</dbReference>
<dbReference type="InterPro" id="IPR014719">
    <property type="entry name" value="Ribosomal_bL12_C/ClpS-like"/>
</dbReference>
<dbReference type="InterPro" id="IPR008932">
    <property type="entry name" value="Ribosomal_bL12_oligo"/>
</dbReference>
<dbReference type="InterPro" id="IPR036235">
    <property type="entry name" value="Ribosomal_bL12_oligo_N_sf"/>
</dbReference>
<dbReference type="NCBIfam" id="TIGR00855">
    <property type="entry name" value="L12"/>
    <property type="match status" value="1"/>
</dbReference>
<dbReference type="PANTHER" id="PTHR45987">
    <property type="entry name" value="39S RIBOSOMAL PROTEIN L12"/>
    <property type="match status" value="1"/>
</dbReference>
<dbReference type="PANTHER" id="PTHR45987:SF4">
    <property type="entry name" value="LARGE RIBOSOMAL SUBUNIT PROTEIN BL12M"/>
    <property type="match status" value="1"/>
</dbReference>
<dbReference type="Pfam" id="PF00542">
    <property type="entry name" value="Ribosomal_L12"/>
    <property type="match status" value="1"/>
</dbReference>
<dbReference type="Pfam" id="PF16320">
    <property type="entry name" value="Ribosomal_L12_N"/>
    <property type="match status" value="1"/>
</dbReference>
<dbReference type="SUPFAM" id="SSF54736">
    <property type="entry name" value="ClpS-like"/>
    <property type="match status" value="1"/>
</dbReference>
<dbReference type="SUPFAM" id="SSF48300">
    <property type="entry name" value="Ribosomal protein L7/12, oligomerisation (N-terminal) domain"/>
    <property type="match status" value="1"/>
</dbReference>
<comment type="function">
    <text evidence="1">Forms part of the ribosomal stalk which helps the ribosome interact with GTP-bound translation factors. Is thus essential for accurate translation.</text>
</comment>
<comment type="subunit">
    <text evidence="1">Homodimer. Part of the ribosomal stalk of the 50S ribosomal subunit. Forms a multimeric L10(L12)X complex, where L10 forms an elongated spine to which 2 to 4 L12 dimers bind in a sequential fashion. Binds GTP-bound translation factors.</text>
</comment>
<comment type="similarity">
    <text evidence="1">Belongs to the bacterial ribosomal protein bL12 family.</text>
</comment>
<name>RL7_SYNY3</name>
<sequence length="128" mass="13259">MSAATDQILEQLKSLSLLEASELVKQIEEAFGVSAAAPVGGMVMAAAAAAPAEAAEEKTEFDVILEEVPADKKIAVLKVVRTITGLGLKEAKELVESTPKAIKEATGKDDAEAIKKQIEEAGGKAAVK</sequence>
<proteinExistence type="evidence at protein level"/>
<feature type="initiator methionine" description="Removed" evidence="2">
    <location>
        <position position="1"/>
    </location>
</feature>
<feature type="chain" id="PRO_0000157595" description="Large ribosomal subunit protein bL12">
    <location>
        <begin position="2"/>
        <end position="128"/>
    </location>
</feature>